<protein>
    <recommendedName>
        <fullName>Cyclic nucleotide-gated channel alpha-2</fullName>
        <shortName>CNG channel alpha-2</shortName>
        <shortName>CNG-2</shortName>
        <shortName evidence="7">CNG2</shortName>
    </recommendedName>
    <alternativeName>
        <fullName>Olfactory cyclic nucleotide-gated channel subunit 1</fullName>
        <shortName evidence="7">OCNC1</shortName>
    </alternativeName>
</protein>
<accession>Q62398</accession>
<accession>Q80XH6</accession>
<dbReference type="EMBL" id="U49391">
    <property type="protein sequence ID" value="AAC52712.1"/>
    <property type="molecule type" value="Genomic_DNA"/>
</dbReference>
<dbReference type="EMBL" id="AK132574">
    <property type="protein sequence ID" value="BAE21237.1"/>
    <property type="molecule type" value="mRNA"/>
</dbReference>
<dbReference type="EMBL" id="CH466624">
    <property type="protein sequence ID" value="EDL26564.1"/>
    <property type="molecule type" value="Genomic_DNA"/>
</dbReference>
<dbReference type="EMBL" id="BC048775">
    <property type="protein sequence ID" value="AAH48775.1"/>
    <property type="molecule type" value="mRNA"/>
</dbReference>
<dbReference type="RefSeq" id="NP_031750.2">
    <property type="nucleotide sequence ID" value="NM_007724.3"/>
</dbReference>
<dbReference type="RefSeq" id="XP_006527824.1">
    <property type="nucleotide sequence ID" value="XM_006527761.1"/>
</dbReference>
<dbReference type="SMR" id="Q62398"/>
<dbReference type="FunCoup" id="Q62398">
    <property type="interactions" value="1317"/>
</dbReference>
<dbReference type="STRING" id="10090.ENSMUSP00000006020"/>
<dbReference type="TCDB" id="1.A.1.5.4">
    <property type="family name" value="the voltage-gated ion channel (vic) superfamily"/>
</dbReference>
<dbReference type="GlyCosmos" id="Q62398">
    <property type="glycosylation" value="1 site, No reported glycans"/>
</dbReference>
<dbReference type="PhosphoSitePlus" id="Q62398"/>
<dbReference type="SwissPalm" id="Q62398"/>
<dbReference type="PaxDb" id="10090-ENSMUSP00000006020"/>
<dbReference type="ProteomicsDB" id="285507"/>
<dbReference type="Antibodypedia" id="17043">
    <property type="antibodies" value="257 antibodies from 31 providers"/>
</dbReference>
<dbReference type="DNASU" id="12789"/>
<dbReference type="Ensembl" id="ENSMUST00000006020.8">
    <property type="protein sequence ID" value="ENSMUSP00000006020.8"/>
    <property type="gene ID" value="ENSMUSG00000005864.8"/>
</dbReference>
<dbReference type="GeneID" id="12789"/>
<dbReference type="KEGG" id="mmu:12789"/>
<dbReference type="UCSC" id="uc009tkk.1">
    <property type="organism name" value="mouse"/>
</dbReference>
<dbReference type="AGR" id="MGI:108040"/>
<dbReference type="CTD" id="1260"/>
<dbReference type="MGI" id="MGI:108040">
    <property type="gene designation" value="Cnga2"/>
</dbReference>
<dbReference type="VEuPathDB" id="HostDB:ENSMUSG00000005864"/>
<dbReference type="eggNOG" id="KOG0500">
    <property type="taxonomic scope" value="Eukaryota"/>
</dbReference>
<dbReference type="GeneTree" id="ENSGT00940000155374"/>
<dbReference type="HOGENOM" id="CLU_005746_12_0_1"/>
<dbReference type="InParanoid" id="Q62398"/>
<dbReference type="OMA" id="DWYYHWL"/>
<dbReference type="OrthoDB" id="421226at2759"/>
<dbReference type="PhylomeDB" id="Q62398"/>
<dbReference type="TreeFam" id="TF319048"/>
<dbReference type="Reactome" id="R-MMU-5620916">
    <property type="pathway name" value="VxPx cargo-targeting to cilium"/>
</dbReference>
<dbReference type="BioGRID-ORCS" id="12789">
    <property type="hits" value="1 hit in 76 CRISPR screens"/>
</dbReference>
<dbReference type="PRO" id="PR:Q62398"/>
<dbReference type="Proteomes" id="UP000000589">
    <property type="component" value="Chromosome X"/>
</dbReference>
<dbReference type="RNAct" id="Q62398">
    <property type="molecule type" value="protein"/>
</dbReference>
<dbReference type="Bgee" id="ENSMUSG00000005864">
    <property type="expression patterns" value="Expressed in olfactory epithelium and 33 other cell types or tissues"/>
</dbReference>
<dbReference type="ExpressionAtlas" id="Q62398">
    <property type="expression patterns" value="baseline and differential"/>
</dbReference>
<dbReference type="GO" id="GO:0060170">
    <property type="term" value="C:ciliary membrane"/>
    <property type="evidence" value="ECO:0000314"/>
    <property type="project" value="ARUK-UCL"/>
</dbReference>
<dbReference type="GO" id="GO:0098804">
    <property type="term" value="C:non-motile cilium membrane"/>
    <property type="evidence" value="ECO:0000314"/>
    <property type="project" value="UniProtKB"/>
</dbReference>
<dbReference type="GO" id="GO:0005886">
    <property type="term" value="C:plasma membrane"/>
    <property type="evidence" value="ECO:0000304"/>
    <property type="project" value="Reactome"/>
</dbReference>
<dbReference type="GO" id="GO:0005262">
    <property type="term" value="F:calcium channel activity"/>
    <property type="evidence" value="ECO:0007669"/>
    <property type="project" value="UniProtKB-KW"/>
</dbReference>
<dbReference type="GO" id="GO:0005516">
    <property type="term" value="F:calmodulin binding"/>
    <property type="evidence" value="ECO:0007669"/>
    <property type="project" value="UniProtKB-KW"/>
</dbReference>
<dbReference type="GO" id="GO:0030552">
    <property type="term" value="F:cAMP binding"/>
    <property type="evidence" value="ECO:0007669"/>
    <property type="project" value="UniProtKB-KW"/>
</dbReference>
<dbReference type="GO" id="GO:0030553">
    <property type="term" value="F:cGMP binding"/>
    <property type="evidence" value="ECO:0007669"/>
    <property type="project" value="UniProtKB-KW"/>
</dbReference>
<dbReference type="GO" id="GO:0005221">
    <property type="term" value="F:intracellularly cyclic nucleotide-activated monoatomic cation channel activity"/>
    <property type="evidence" value="ECO:0007669"/>
    <property type="project" value="InterPro"/>
</dbReference>
<dbReference type="GO" id="GO:0005216">
    <property type="term" value="F:monoatomic ion channel activity"/>
    <property type="evidence" value="ECO:0000315"/>
    <property type="project" value="MGI"/>
</dbReference>
<dbReference type="GO" id="GO:0005249">
    <property type="term" value="F:voltage-gated potassium channel activity"/>
    <property type="evidence" value="ECO:0007669"/>
    <property type="project" value="InterPro"/>
</dbReference>
<dbReference type="GO" id="GO:0006816">
    <property type="term" value="P:calcium ion transport"/>
    <property type="evidence" value="ECO:0000250"/>
    <property type="project" value="UniProtKB"/>
</dbReference>
<dbReference type="GO" id="GO:0006813">
    <property type="term" value="P:potassium ion transport"/>
    <property type="evidence" value="ECO:0000250"/>
    <property type="project" value="UniProtKB"/>
</dbReference>
<dbReference type="GO" id="GO:0007608">
    <property type="term" value="P:sensory perception of smell"/>
    <property type="evidence" value="ECO:0000315"/>
    <property type="project" value="MGI"/>
</dbReference>
<dbReference type="GO" id="GO:0006814">
    <property type="term" value="P:sodium ion transport"/>
    <property type="evidence" value="ECO:0000250"/>
    <property type="project" value="UniProtKB"/>
</dbReference>
<dbReference type="CDD" id="cd00038">
    <property type="entry name" value="CAP_ED"/>
    <property type="match status" value="1"/>
</dbReference>
<dbReference type="FunFam" id="2.60.120.10:FF:000002">
    <property type="entry name" value="Cyclic nucleotide gated channel alpha 1a"/>
    <property type="match status" value="1"/>
</dbReference>
<dbReference type="FunFam" id="1.10.287.630:FF:000001">
    <property type="entry name" value="Cyclic nucleotide-gated channel alpha 3"/>
    <property type="match status" value="1"/>
</dbReference>
<dbReference type="FunFam" id="1.10.287.70:FF:000030">
    <property type="entry name" value="Cyclic nucleotide-gated channel alpha 3"/>
    <property type="match status" value="1"/>
</dbReference>
<dbReference type="FunFam" id="1.20.5.300:FF:000002">
    <property type="entry name" value="Cyclic nucleotide-gated channel alpha 3"/>
    <property type="match status" value="1"/>
</dbReference>
<dbReference type="Gene3D" id="1.10.287.70">
    <property type="match status" value="1"/>
</dbReference>
<dbReference type="Gene3D" id="1.20.5.300">
    <property type="match status" value="1"/>
</dbReference>
<dbReference type="Gene3D" id="1.10.287.630">
    <property type="entry name" value="Helix hairpin bin"/>
    <property type="match status" value="1"/>
</dbReference>
<dbReference type="Gene3D" id="2.60.120.10">
    <property type="entry name" value="Jelly Rolls"/>
    <property type="match status" value="1"/>
</dbReference>
<dbReference type="InterPro" id="IPR032406">
    <property type="entry name" value="CLZ_dom"/>
</dbReference>
<dbReference type="InterPro" id="IPR050866">
    <property type="entry name" value="CNG_cation_channel"/>
</dbReference>
<dbReference type="InterPro" id="IPR018488">
    <property type="entry name" value="cNMP-bd_CS"/>
</dbReference>
<dbReference type="InterPro" id="IPR000595">
    <property type="entry name" value="cNMP-bd_dom"/>
</dbReference>
<dbReference type="InterPro" id="IPR018490">
    <property type="entry name" value="cNMP-bd_dom_sf"/>
</dbReference>
<dbReference type="InterPro" id="IPR005821">
    <property type="entry name" value="Ion_trans_dom"/>
</dbReference>
<dbReference type="InterPro" id="IPR003938">
    <property type="entry name" value="K_chnl_volt-dep_EAG/ELK/ERG"/>
</dbReference>
<dbReference type="InterPro" id="IPR014710">
    <property type="entry name" value="RmlC-like_jellyroll"/>
</dbReference>
<dbReference type="PANTHER" id="PTHR45638">
    <property type="entry name" value="CYCLIC NUCLEOTIDE-GATED CATION CHANNEL SUBUNIT A"/>
    <property type="match status" value="1"/>
</dbReference>
<dbReference type="PANTHER" id="PTHR45638:SF3">
    <property type="entry name" value="CYCLIC NUCLEOTIDE-GATED OLFACTORY CHANNEL"/>
    <property type="match status" value="1"/>
</dbReference>
<dbReference type="Pfam" id="PF16526">
    <property type="entry name" value="CLZ"/>
    <property type="match status" value="1"/>
</dbReference>
<dbReference type="Pfam" id="PF00027">
    <property type="entry name" value="cNMP_binding"/>
    <property type="match status" value="1"/>
</dbReference>
<dbReference type="Pfam" id="PF00520">
    <property type="entry name" value="Ion_trans"/>
    <property type="match status" value="1"/>
</dbReference>
<dbReference type="PRINTS" id="PR01463">
    <property type="entry name" value="EAGCHANLFMLY"/>
</dbReference>
<dbReference type="SMART" id="SM00100">
    <property type="entry name" value="cNMP"/>
    <property type="match status" value="1"/>
</dbReference>
<dbReference type="SUPFAM" id="SSF51206">
    <property type="entry name" value="cAMP-binding domain-like"/>
    <property type="match status" value="1"/>
</dbReference>
<dbReference type="SUPFAM" id="SSF81324">
    <property type="entry name" value="Voltage-gated potassium channels"/>
    <property type="match status" value="1"/>
</dbReference>
<dbReference type="PROSITE" id="PS00888">
    <property type="entry name" value="CNMP_BINDING_1"/>
    <property type="match status" value="1"/>
</dbReference>
<dbReference type="PROSITE" id="PS00889">
    <property type="entry name" value="CNMP_BINDING_2"/>
    <property type="match status" value="1"/>
</dbReference>
<dbReference type="PROSITE" id="PS50042">
    <property type="entry name" value="CNMP_BINDING_3"/>
    <property type="match status" value="1"/>
</dbReference>
<gene>
    <name evidence="7 9" type="primary">Cnga2</name>
    <name type="synonym">Cncg2</name>
    <name type="synonym">Cncg4</name>
</gene>
<reference key="1">
    <citation type="journal article" date="1996" name="J. Mol. Cell. Cardiol.">
        <title>Cloning and characterization of an olfactory cyclic nucleotide-gated channel expressed in mouse heart.</title>
        <authorList>
            <person name="Ruiz M.L."/>
            <person name="London B."/>
            <person name="Nadal-Ginard B."/>
        </authorList>
    </citation>
    <scope>NUCLEOTIDE SEQUENCE [GENOMIC DNA]</scope>
    <source>
        <tissue>Heart</tissue>
    </source>
</reference>
<reference key="2">
    <citation type="journal article" date="2005" name="Science">
        <title>The transcriptional landscape of the mammalian genome.</title>
        <authorList>
            <person name="Carninci P."/>
            <person name="Kasukawa T."/>
            <person name="Katayama S."/>
            <person name="Gough J."/>
            <person name="Frith M.C."/>
            <person name="Maeda N."/>
            <person name="Oyama R."/>
            <person name="Ravasi T."/>
            <person name="Lenhard B."/>
            <person name="Wells C."/>
            <person name="Kodzius R."/>
            <person name="Shimokawa K."/>
            <person name="Bajic V.B."/>
            <person name="Brenner S.E."/>
            <person name="Batalov S."/>
            <person name="Forrest A.R."/>
            <person name="Zavolan M."/>
            <person name="Davis M.J."/>
            <person name="Wilming L.G."/>
            <person name="Aidinis V."/>
            <person name="Allen J.E."/>
            <person name="Ambesi-Impiombato A."/>
            <person name="Apweiler R."/>
            <person name="Aturaliya R.N."/>
            <person name="Bailey T.L."/>
            <person name="Bansal M."/>
            <person name="Baxter L."/>
            <person name="Beisel K.W."/>
            <person name="Bersano T."/>
            <person name="Bono H."/>
            <person name="Chalk A.M."/>
            <person name="Chiu K.P."/>
            <person name="Choudhary V."/>
            <person name="Christoffels A."/>
            <person name="Clutterbuck D.R."/>
            <person name="Crowe M.L."/>
            <person name="Dalla E."/>
            <person name="Dalrymple B.P."/>
            <person name="de Bono B."/>
            <person name="Della Gatta G."/>
            <person name="di Bernardo D."/>
            <person name="Down T."/>
            <person name="Engstrom P."/>
            <person name="Fagiolini M."/>
            <person name="Faulkner G."/>
            <person name="Fletcher C.F."/>
            <person name="Fukushima T."/>
            <person name="Furuno M."/>
            <person name="Futaki S."/>
            <person name="Gariboldi M."/>
            <person name="Georgii-Hemming P."/>
            <person name="Gingeras T.R."/>
            <person name="Gojobori T."/>
            <person name="Green R.E."/>
            <person name="Gustincich S."/>
            <person name="Harbers M."/>
            <person name="Hayashi Y."/>
            <person name="Hensch T.K."/>
            <person name="Hirokawa N."/>
            <person name="Hill D."/>
            <person name="Huminiecki L."/>
            <person name="Iacono M."/>
            <person name="Ikeo K."/>
            <person name="Iwama A."/>
            <person name="Ishikawa T."/>
            <person name="Jakt M."/>
            <person name="Kanapin A."/>
            <person name="Katoh M."/>
            <person name="Kawasawa Y."/>
            <person name="Kelso J."/>
            <person name="Kitamura H."/>
            <person name="Kitano H."/>
            <person name="Kollias G."/>
            <person name="Krishnan S.P."/>
            <person name="Kruger A."/>
            <person name="Kummerfeld S.K."/>
            <person name="Kurochkin I.V."/>
            <person name="Lareau L.F."/>
            <person name="Lazarevic D."/>
            <person name="Lipovich L."/>
            <person name="Liu J."/>
            <person name="Liuni S."/>
            <person name="McWilliam S."/>
            <person name="Madan Babu M."/>
            <person name="Madera M."/>
            <person name="Marchionni L."/>
            <person name="Matsuda H."/>
            <person name="Matsuzawa S."/>
            <person name="Miki H."/>
            <person name="Mignone F."/>
            <person name="Miyake S."/>
            <person name="Morris K."/>
            <person name="Mottagui-Tabar S."/>
            <person name="Mulder N."/>
            <person name="Nakano N."/>
            <person name="Nakauchi H."/>
            <person name="Ng P."/>
            <person name="Nilsson R."/>
            <person name="Nishiguchi S."/>
            <person name="Nishikawa S."/>
            <person name="Nori F."/>
            <person name="Ohara O."/>
            <person name="Okazaki Y."/>
            <person name="Orlando V."/>
            <person name="Pang K.C."/>
            <person name="Pavan W.J."/>
            <person name="Pavesi G."/>
            <person name="Pesole G."/>
            <person name="Petrovsky N."/>
            <person name="Piazza S."/>
            <person name="Reed J."/>
            <person name="Reid J.F."/>
            <person name="Ring B.Z."/>
            <person name="Ringwald M."/>
            <person name="Rost B."/>
            <person name="Ruan Y."/>
            <person name="Salzberg S.L."/>
            <person name="Sandelin A."/>
            <person name="Schneider C."/>
            <person name="Schoenbach C."/>
            <person name="Sekiguchi K."/>
            <person name="Semple C.A."/>
            <person name="Seno S."/>
            <person name="Sessa L."/>
            <person name="Sheng Y."/>
            <person name="Shibata Y."/>
            <person name="Shimada H."/>
            <person name="Shimada K."/>
            <person name="Silva D."/>
            <person name="Sinclair B."/>
            <person name="Sperling S."/>
            <person name="Stupka E."/>
            <person name="Sugiura K."/>
            <person name="Sultana R."/>
            <person name="Takenaka Y."/>
            <person name="Taki K."/>
            <person name="Tammoja K."/>
            <person name="Tan S.L."/>
            <person name="Tang S."/>
            <person name="Taylor M.S."/>
            <person name="Tegner J."/>
            <person name="Teichmann S.A."/>
            <person name="Ueda H.R."/>
            <person name="van Nimwegen E."/>
            <person name="Verardo R."/>
            <person name="Wei C.L."/>
            <person name="Yagi K."/>
            <person name="Yamanishi H."/>
            <person name="Zabarovsky E."/>
            <person name="Zhu S."/>
            <person name="Zimmer A."/>
            <person name="Hide W."/>
            <person name="Bult C."/>
            <person name="Grimmond S.M."/>
            <person name="Teasdale R.D."/>
            <person name="Liu E.T."/>
            <person name="Brusic V."/>
            <person name="Quackenbush J."/>
            <person name="Wahlestedt C."/>
            <person name="Mattick J.S."/>
            <person name="Hume D.A."/>
            <person name="Kai C."/>
            <person name="Sasaki D."/>
            <person name="Tomaru Y."/>
            <person name="Fukuda S."/>
            <person name="Kanamori-Katayama M."/>
            <person name="Suzuki M."/>
            <person name="Aoki J."/>
            <person name="Arakawa T."/>
            <person name="Iida J."/>
            <person name="Imamura K."/>
            <person name="Itoh M."/>
            <person name="Kato T."/>
            <person name="Kawaji H."/>
            <person name="Kawagashira N."/>
            <person name="Kawashima T."/>
            <person name="Kojima M."/>
            <person name="Kondo S."/>
            <person name="Konno H."/>
            <person name="Nakano K."/>
            <person name="Ninomiya N."/>
            <person name="Nishio T."/>
            <person name="Okada M."/>
            <person name="Plessy C."/>
            <person name="Shibata K."/>
            <person name="Shiraki T."/>
            <person name="Suzuki S."/>
            <person name="Tagami M."/>
            <person name="Waki K."/>
            <person name="Watahiki A."/>
            <person name="Okamura-Oho Y."/>
            <person name="Suzuki H."/>
            <person name="Kawai J."/>
            <person name="Hayashizaki Y."/>
        </authorList>
    </citation>
    <scope>NUCLEOTIDE SEQUENCE [LARGE SCALE MRNA]</scope>
</reference>
<reference key="3">
    <citation type="submission" date="2005-07" db="EMBL/GenBank/DDBJ databases">
        <authorList>
            <person name="Mural R.J."/>
            <person name="Adams M.D."/>
            <person name="Myers E.W."/>
            <person name="Smith H.O."/>
            <person name="Venter J.C."/>
        </authorList>
    </citation>
    <scope>NUCLEOTIDE SEQUENCE [LARGE SCALE GENOMIC DNA]</scope>
</reference>
<reference key="4">
    <citation type="journal article" date="2004" name="Genome Res.">
        <title>The status, quality, and expansion of the NIH full-length cDNA project: the Mammalian Gene Collection (MGC).</title>
        <authorList>
            <consortium name="The MGC Project Team"/>
        </authorList>
    </citation>
    <scope>NUCLEOTIDE SEQUENCE [LARGE SCALE MRNA]</scope>
    <source>
        <tissue>Olfactory epithelium</tissue>
    </source>
</reference>
<reference key="5">
    <citation type="journal article" date="2001" name="Science">
        <title>Nomenclature for ion channel subunits.</title>
        <authorList>
            <person name="Bradley J."/>
            <person name="Frings S."/>
            <person name="Yau K.W."/>
            <person name="Reed R."/>
        </authorList>
    </citation>
    <scope>NOMENCLATURE</scope>
</reference>
<proteinExistence type="evidence at transcript level"/>
<feature type="chain" id="PRO_0000219313" description="Cyclic nucleotide-gated channel alpha-2">
    <location>
        <begin position="1"/>
        <end position="664"/>
    </location>
</feature>
<feature type="topological domain" description="Cytoplasmic" evidence="8">
    <location>
        <begin position="1"/>
        <end position="146"/>
    </location>
</feature>
<feature type="transmembrane region" description="Helical; Name=S1" evidence="2">
    <location>
        <begin position="147"/>
        <end position="168"/>
    </location>
</feature>
<feature type="topological domain" description="Extracellular" evidence="8">
    <location>
        <begin position="169"/>
        <end position="178"/>
    </location>
</feature>
<feature type="transmembrane region" description="Helical; Name=S2" evidence="2">
    <location>
        <begin position="179"/>
        <end position="199"/>
    </location>
</feature>
<feature type="topological domain" description="Cytoplasmic" evidence="8">
    <location>
        <begin position="200"/>
        <end position="224"/>
    </location>
</feature>
<feature type="transmembrane region" description="Helical; Name=S3" evidence="2">
    <location>
        <begin position="225"/>
        <end position="243"/>
    </location>
</feature>
<feature type="topological domain" description="Extracellular" evidence="8">
    <location>
        <begin position="244"/>
        <end position="248"/>
    </location>
</feature>
<feature type="transmembrane region" description="Helical; Name=S4" evidence="2">
    <location>
        <begin position="249"/>
        <end position="267"/>
    </location>
</feature>
<feature type="topological domain" description="Cytoplasmic" evidence="8">
    <location>
        <begin position="268"/>
        <end position="274"/>
    </location>
</feature>
<feature type="transmembrane region" description="Helical; Name=S5" evidence="2">
    <location>
        <begin position="275"/>
        <end position="298"/>
    </location>
</feature>
<feature type="topological domain" description="Extracellular" evidence="8">
    <location>
        <begin position="299"/>
        <end position="321"/>
    </location>
</feature>
<feature type="transmembrane region" description="Helical; Name=P-helix" evidence="2">
    <location>
        <begin position="322"/>
        <end position="356"/>
    </location>
</feature>
<feature type="transmembrane region" description="Helical; Name=S6" evidence="2">
    <location>
        <begin position="357"/>
        <end position="381"/>
    </location>
</feature>
<feature type="topological domain" description="Cytoplasmic" evidence="8">
    <location>
        <begin position="382"/>
        <end position="664"/>
    </location>
</feature>
<feature type="region of interest" description="Disordered" evidence="6">
    <location>
        <begin position="1"/>
        <end position="61"/>
    </location>
</feature>
<feature type="region of interest" description="Ion conduction pathway" evidence="2">
    <location>
        <begin position="272"/>
        <end position="380"/>
    </location>
</feature>
<feature type="region of interest" description="Selectivity filter" evidence="2">
    <location>
        <begin position="339"/>
        <end position="342"/>
    </location>
</feature>
<feature type="region of interest" description="C-linker" evidence="2">
    <location>
        <begin position="382"/>
        <end position="458"/>
    </location>
</feature>
<feature type="region of interest" description="Cyclic nucleotide-binding domain" evidence="2">
    <location>
        <begin position="462"/>
        <end position="582"/>
    </location>
</feature>
<feature type="coiled-coil region" evidence="2">
    <location>
        <begin position="599"/>
        <end position="653"/>
    </location>
</feature>
<feature type="compositionally biased region" description="Polar residues" evidence="6">
    <location>
        <begin position="1"/>
        <end position="10"/>
    </location>
</feature>
<feature type="binding site" evidence="2">
    <location>
        <position position="522"/>
    </location>
    <ligand>
        <name>3',5'-cyclic GMP</name>
        <dbReference type="ChEBI" id="CHEBI:57746"/>
    </ligand>
</feature>
<feature type="binding site" evidence="2">
    <location>
        <position position="525"/>
    </location>
    <ligand>
        <name>3',5'-cyclic GMP</name>
        <dbReference type="ChEBI" id="CHEBI:57746"/>
    </ligand>
</feature>
<feature type="binding site" evidence="2">
    <location>
        <position position="538"/>
    </location>
    <ligand>
        <name>3',5'-cyclic AMP</name>
        <dbReference type="ChEBI" id="CHEBI:58165"/>
    </ligand>
</feature>
<feature type="binding site" evidence="2">
    <location>
        <position position="538"/>
    </location>
    <ligand>
        <name>3',5'-cyclic GMP</name>
        <dbReference type="ChEBI" id="CHEBI:57746"/>
    </ligand>
</feature>
<feature type="binding site" evidence="2">
    <location>
        <position position="539"/>
    </location>
    <ligand>
        <name>3',5'-cyclic AMP</name>
        <dbReference type="ChEBI" id="CHEBI:58165"/>
    </ligand>
</feature>
<feature type="binding site" evidence="2">
    <location>
        <position position="539"/>
    </location>
    <ligand>
        <name>3',5'-cyclic GMP</name>
        <dbReference type="ChEBI" id="CHEBI:57746"/>
    </ligand>
</feature>
<feature type="site" description="Central gate" evidence="2">
    <location>
        <position position="366"/>
    </location>
</feature>
<feature type="site" description="Central gate" evidence="2">
    <location>
        <position position="370"/>
    </location>
</feature>
<feature type="sequence conflict" description="In Ref. 1; AAC52712." evidence="8" ref="1">
    <original>T</original>
    <variation>P</variation>
    <location>
        <position position="110"/>
    </location>
</feature>
<feature type="sequence conflict" description="In Ref. 1; AAC52712." evidence="8" ref="1">
    <original>V</original>
    <variation>F</variation>
    <location>
        <position position="355"/>
    </location>
</feature>
<feature type="sequence conflict" description="In Ref. 1; AAC52712." evidence="8" ref="1">
    <original>AN</original>
    <variation>GT</variation>
    <location>
        <begin position="540"/>
        <end position="541"/>
    </location>
</feature>
<name>CNGA2_MOUSE</name>
<sequence length="664" mass="76193">MMTEKSNGVKSSPANNHNHHPPPSIKANGKDDHRAGSRPQSVAADDDTSSELQRLAEMDTPRRGRGGFRRIVRLVGIIRDWANKNFREEEPRPDSFLERFRGPELQTVTTHQGDGKGDKDGEGKGTKKKFELFVLDPAGDWYYRWLFVIAMPVLYNWCLLVARACFSDLQRNYFVVWLVLDYFSDTVYIADLIIRLRTGFLEQGLLVKDPKKLRDNYIHTLQFKLDVASIIPTDLIYFAVGIHSPEVRFNRLLHFARMFEFFDRTETRTSYPNIFRISNLVLYILVIIHWNACIYYAISKSIGFGVDTWVYPNITDPEYGYLAREYIYCLYWSTLTLTTIGETPPPVKDEEYLFVIFDFLIGVLIFATIVGNVGSMISNMNATRAEFQAKIDAVKHYMQFRKVSKDMEAKVIKWFDYLWTNKKTVDEREVLKNLPAKLRAEIAINVHLSTLKKVRIFQDCEAGLLVELVLKLRPQVFSPGDYICRKGDIGKEMYIIKEGKLAVVADDGVTQYALLSAGSCFGEISILNIKGSKMGNRRTANIRSLGYSDLFCLSKDDLMEAVTEYPDAKKVLEERGREILMKEGLLDENEVAASMEVDVQEKLEQLETNMETLYTRFARLLAEYTGAQQKLKQRITVLETKMKQNHEDDYLSDGINTPEPAVAE</sequence>
<evidence type="ECO:0000250" key="1"/>
<evidence type="ECO:0000250" key="2">
    <source>
        <dbReference type="UniProtKB" id="P29973"/>
    </source>
</evidence>
<evidence type="ECO:0000250" key="3">
    <source>
        <dbReference type="UniProtKB" id="Q00194"/>
    </source>
</evidence>
<evidence type="ECO:0000250" key="4">
    <source>
        <dbReference type="UniProtKB" id="Q00195"/>
    </source>
</evidence>
<evidence type="ECO:0000255" key="5"/>
<evidence type="ECO:0000256" key="6">
    <source>
        <dbReference type="SAM" id="MobiDB-lite"/>
    </source>
</evidence>
<evidence type="ECO:0000303" key="7">
    <source>
    </source>
</evidence>
<evidence type="ECO:0000305" key="8"/>
<evidence type="ECO:0000312" key="9">
    <source>
        <dbReference type="MGI" id="MGI:108040"/>
    </source>
</evidence>
<keyword id="KW-0106">Calcium</keyword>
<keyword id="KW-0107">Calcium channel</keyword>
<keyword id="KW-0109">Calcium transport</keyword>
<keyword id="KW-0112">Calmodulin-binding</keyword>
<keyword id="KW-0114">cAMP</keyword>
<keyword id="KW-0116">cAMP-binding</keyword>
<keyword id="KW-1003">Cell membrane</keyword>
<keyword id="KW-0966">Cell projection</keyword>
<keyword id="KW-0140">cGMP</keyword>
<keyword id="KW-0142">cGMP-binding</keyword>
<keyword id="KW-0175">Coiled coil</keyword>
<keyword id="KW-0407">Ion channel</keyword>
<keyword id="KW-0406">Ion transport</keyword>
<keyword id="KW-1071">Ligand-gated ion channel</keyword>
<keyword id="KW-0472">Membrane</keyword>
<keyword id="KW-0547">Nucleotide-binding</keyword>
<keyword id="KW-0552">Olfaction</keyword>
<keyword id="KW-1185">Reference proteome</keyword>
<keyword id="KW-0716">Sensory transduction</keyword>
<keyword id="KW-0812">Transmembrane</keyword>
<keyword id="KW-1133">Transmembrane helix</keyword>
<keyword id="KW-0813">Transport</keyword>
<organism>
    <name type="scientific">Mus musculus</name>
    <name type="common">Mouse</name>
    <dbReference type="NCBI Taxonomy" id="10090"/>
    <lineage>
        <taxon>Eukaryota</taxon>
        <taxon>Metazoa</taxon>
        <taxon>Chordata</taxon>
        <taxon>Craniata</taxon>
        <taxon>Vertebrata</taxon>
        <taxon>Euteleostomi</taxon>
        <taxon>Mammalia</taxon>
        <taxon>Eutheria</taxon>
        <taxon>Euarchontoglires</taxon>
        <taxon>Glires</taxon>
        <taxon>Rodentia</taxon>
        <taxon>Myomorpha</taxon>
        <taxon>Muroidea</taxon>
        <taxon>Muridae</taxon>
        <taxon>Murinae</taxon>
        <taxon>Mus</taxon>
        <taxon>Mus</taxon>
    </lineage>
</organism>
<comment type="function">
    <text evidence="4">Pore-forming subunit of the olfactory cyclic nucleotide-gated channel. Operates in the cilia of olfactory sensory neurons where chemical stimulation of the odorant is converted to an electrical signal. Mediates odorant-induced cAMP-dependent Ca(2+) influx triggering neuron depolarization. The rise of intracellular Ca(2+) levels potentiates the olfactory response by activating Ca(2+)-dependent Cl(-) channels, but it also serves as a negative feedback signal to desensitize the channel for rapid adaptation to odorants. Conducts cAMP- and cGMP-gated ion currents, with permeability for monovalent and divalent cations.</text>
</comment>
<comment type="catalytic activity">
    <reaction evidence="4">
        <text>Ca(2+)(in) = Ca(2+)(out)</text>
        <dbReference type="Rhea" id="RHEA:29671"/>
        <dbReference type="ChEBI" id="CHEBI:29108"/>
    </reaction>
</comment>
<comment type="catalytic activity">
    <reaction evidence="4">
        <text>Na(+)(in) = Na(+)(out)</text>
        <dbReference type="Rhea" id="RHEA:34963"/>
        <dbReference type="ChEBI" id="CHEBI:29101"/>
    </reaction>
</comment>
<comment type="catalytic activity">
    <reaction evidence="4">
        <text>K(+)(in) = K(+)(out)</text>
        <dbReference type="Rhea" id="RHEA:29463"/>
        <dbReference type="ChEBI" id="CHEBI:29103"/>
    </reaction>
</comment>
<comment type="catalytic activity">
    <reaction evidence="3">
        <text>NH4(+)(in) = NH4(+)(out)</text>
        <dbReference type="Rhea" id="RHEA:28747"/>
        <dbReference type="ChEBI" id="CHEBI:28938"/>
    </reaction>
</comment>
<comment type="catalytic activity">
    <reaction evidence="3">
        <text>Rb(+)(in) = Rb(+)(out)</text>
        <dbReference type="Rhea" id="RHEA:78547"/>
        <dbReference type="ChEBI" id="CHEBI:49847"/>
    </reaction>
</comment>
<comment type="catalytic activity">
    <reaction evidence="3">
        <text>Li(+)(in) = Li(+)(out)</text>
        <dbReference type="Rhea" id="RHEA:78551"/>
        <dbReference type="ChEBI" id="CHEBI:49713"/>
    </reaction>
</comment>
<comment type="catalytic activity">
    <reaction evidence="3">
        <text>Cs(+)(in) = Cs(+)(out)</text>
        <dbReference type="Rhea" id="RHEA:78555"/>
        <dbReference type="ChEBI" id="CHEBI:49547"/>
    </reaction>
</comment>
<comment type="subunit">
    <text evidence="4">The olfactory cyclic nucleotide-gated channel is an heterotetramer composed of CNGA2, CNGA4 and CNGB1b subunits with 2:1:1 stoichiometry.</text>
</comment>
<comment type="subcellular location">
    <subcellularLocation>
        <location evidence="4">Cell projection</location>
        <location evidence="4">Cilium membrane</location>
        <topology evidence="5">Multi-pass membrane protein</topology>
    </subcellularLocation>
</comment>
<comment type="domain">
    <text evidence="1">The C-terminal coiled-coil domain mediates trimerization of CNGA subunits.</text>
</comment>
<comment type="similarity">
    <text evidence="8">Belongs to the cyclic nucleotide-gated cation channel (TC 1.A.1.5) family. CNGA2 subfamily.</text>
</comment>
<comment type="caution">
    <text evidence="8">It is uncertain whether Met-1 or Met-2 is the initiator.</text>
</comment>